<organism>
    <name type="scientific">Methanococcus maripaludis (strain C6 / ATCC BAA-1332)</name>
    <dbReference type="NCBI Taxonomy" id="444158"/>
    <lineage>
        <taxon>Archaea</taxon>
        <taxon>Methanobacteriati</taxon>
        <taxon>Methanobacteriota</taxon>
        <taxon>Methanomada group</taxon>
        <taxon>Methanococci</taxon>
        <taxon>Methanococcales</taxon>
        <taxon>Methanococcaceae</taxon>
        <taxon>Methanococcus</taxon>
    </lineage>
</organism>
<evidence type="ECO:0000255" key="1">
    <source>
        <dbReference type="HAMAP-Rule" id="MF_00736"/>
    </source>
</evidence>
<evidence type="ECO:0000305" key="2"/>
<keyword id="KW-0687">Ribonucleoprotein</keyword>
<keyword id="KW-0689">Ribosomal protein</keyword>
<keyword id="KW-0694">RNA-binding</keyword>
<keyword id="KW-0699">rRNA-binding</keyword>
<protein>
    <recommendedName>
        <fullName evidence="1">Large ribosomal subunit protein uL11</fullName>
    </recommendedName>
    <alternativeName>
        <fullName evidence="2">50S ribosomal protein L11</fullName>
    </alternativeName>
</protein>
<sequence>MAEQVVEILVSGGKATAGPPLGPAIGPLGVNIMQVVQKINEMTKDYDGMSVPVKVIVNTDKRTFEVEVGIPPASALVKKELGITTGSQEPKHQVAGNLTMEQVVKIAKMKQDAMLAYNLKNASKEVIGTCVSVGVNVEGMTPKEAQKAVDAGQFDSYFN</sequence>
<comment type="function">
    <text evidence="1">Forms part of the ribosomal stalk which helps the ribosome interact with GTP-bound translation factors.</text>
</comment>
<comment type="subunit">
    <text evidence="1">Part of the ribosomal stalk of the 50S ribosomal subunit. Interacts with L10 and the large rRNA to form the base of the stalk. L10 forms an elongated spine to which L12 dimers bind in a sequential fashion forming a multimeric L10(L12)X complex.</text>
</comment>
<comment type="similarity">
    <text evidence="1">Belongs to the universal ribosomal protein uL11 family.</text>
</comment>
<reference key="1">
    <citation type="submission" date="2007-10" db="EMBL/GenBank/DDBJ databases">
        <title>Complete sequence of Methanococcus maripaludis C6.</title>
        <authorList>
            <consortium name="US DOE Joint Genome Institute"/>
            <person name="Copeland A."/>
            <person name="Lucas S."/>
            <person name="Lapidus A."/>
            <person name="Barry K."/>
            <person name="Glavina del Rio T."/>
            <person name="Dalin E."/>
            <person name="Tice H."/>
            <person name="Pitluck S."/>
            <person name="Clum A."/>
            <person name="Schmutz J."/>
            <person name="Larimer F."/>
            <person name="Land M."/>
            <person name="Hauser L."/>
            <person name="Kyrpides N."/>
            <person name="Mikhailova N."/>
            <person name="Sieprawska-Lupa M."/>
            <person name="Whitman W.B."/>
            <person name="Richardson P."/>
        </authorList>
    </citation>
    <scope>NUCLEOTIDE SEQUENCE [LARGE SCALE GENOMIC DNA]</scope>
    <source>
        <strain>C6 / ATCC BAA-1332</strain>
    </source>
</reference>
<dbReference type="EMBL" id="CP000867">
    <property type="protein sequence ID" value="ABX02053.1"/>
    <property type="molecule type" value="Genomic_DNA"/>
</dbReference>
<dbReference type="SMR" id="A9A9N0"/>
<dbReference type="STRING" id="444158.MmarC6_1240"/>
<dbReference type="KEGG" id="mmx:MmarC6_1240"/>
<dbReference type="eggNOG" id="arCOG04372">
    <property type="taxonomic scope" value="Archaea"/>
</dbReference>
<dbReference type="HOGENOM" id="CLU_074237_4_0_2"/>
<dbReference type="OrthoDB" id="8842at2157"/>
<dbReference type="PhylomeDB" id="A9A9N0"/>
<dbReference type="GO" id="GO:0015934">
    <property type="term" value="C:large ribosomal subunit"/>
    <property type="evidence" value="ECO:0007669"/>
    <property type="project" value="TreeGrafter"/>
</dbReference>
<dbReference type="GO" id="GO:0070180">
    <property type="term" value="F:large ribosomal subunit rRNA binding"/>
    <property type="evidence" value="ECO:0007669"/>
    <property type="project" value="UniProtKB-UniRule"/>
</dbReference>
<dbReference type="GO" id="GO:0003735">
    <property type="term" value="F:structural constituent of ribosome"/>
    <property type="evidence" value="ECO:0007669"/>
    <property type="project" value="InterPro"/>
</dbReference>
<dbReference type="GO" id="GO:0006412">
    <property type="term" value="P:translation"/>
    <property type="evidence" value="ECO:0007669"/>
    <property type="project" value="UniProtKB-UniRule"/>
</dbReference>
<dbReference type="CDD" id="cd00349">
    <property type="entry name" value="Ribosomal_L11"/>
    <property type="match status" value="1"/>
</dbReference>
<dbReference type="FunFam" id="1.10.10.250:FF:000006">
    <property type="entry name" value="50S ribosomal protein L11"/>
    <property type="match status" value="1"/>
</dbReference>
<dbReference type="FunFam" id="3.30.1550.10:FF:000007">
    <property type="entry name" value="50S ribosomal protein L11"/>
    <property type="match status" value="1"/>
</dbReference>
<dbReference type="Gene3D" id="1.10.10.250">
    <property type="entry name" value="Ribosomal protein L11, C-terminal domain"/>
    <property type="match status" value="1"/>
</dbReference>
<dbReference type="Gene3D" id="3.30.1550.10">
    <property type="entry name" value="Ribosomal protein L11/L12, N-terminal domain"/>
    <property type="match status" value="1"/>
</dbReference>
<dbReference type="HAMAP" id="MF_00736">
    <property type="entry name" value="Ribosomal_uL11"/>
    <property type="match status" value="1"/>
</dbReference>
<dbReference type="InterPro" id="IPR000911">
    <property type="entry name" value="Ribosomal_uL11"/>
</dbReference>
<dbReference type="InterPro" id="IPR020783">
    <property type="entry name" value="Ribosomal_uL11_C"/>
</dbReference>
<dbReference type="InterPro" id="IPR036769">
    <property type="entry name" value="Ribosomal_uL11_C_sf"/>
</dbReference>
<dbReference type="InterPro" id="IPR020785">
    <property type="entry name" value="Ribosomal_uL11_CS"/>
</dbReference>
<dbReference type="InterPro" id="IPR020784">
    <property type="entry name" value="Ribosomal_uL11_N"/>
</dbReference>
<dbReference type="InterPro" id="IPR036796">
    <property type="entry name" value="Ribosomal_uL11_N_sf"/>
</dbReference>
<dbReference type="NCBIfam" id="NF002232">
    <property type="entry name" value="PRK01143.1"/>
    <property type="match status" value="1"/>
</dbReference>
<dbReference type="PANTHER" id="PTHR11661">
    <property type="entry name" value="60S RIBOSOMAL PROTEIN L12"/>
    <property type="match status" value="1"/>
</dbReference>
<dbReference type="PANTHER" id="PTHR11661:SF1">
    <property type="entry name" value="LARGE RIBOSOMAL SUBUNIT PROTEIN UL11M"/>
    <property type="match status" value="1"/>
</dbReference>
<dbReference type="Pfam" id="PF00298">
    <property type="entry name" value="Ribosomal_L11"/>
    <property type="match status" value="1"/>
</dbReference>
<dbReference type="Pfam" id="PF03946">
    <property type="entry name" value="Ribosomal_L11_N"/>
    <property type="match status" value="1"/>
</dbReference>
<dbReference type="SMART" id="SM00649">
    <property type="entry name" value="RL11"/>
    <property type="match status" value="1"/>
</dbReference>
<dbReference type="SUPFAM" id="SSF54747">
    <property type="entry name" value="Ribosomal L11/L12e N-terminal domain"/>
    <property type="match status" value="1"/>
</dbReference>
<dbReference type="SUPFAM" id="SSF46906">
    <property type="entry name" value="Ribosomal protein L11, C-terminal domain"/>
    <property type="match status" value="1"/>
</dbReference>
<dbReference type="PROSITE" id="PS00359">
    <property type="entry name" value="RIBOSOMAL_L11"/>
    <property type="match status" value="1"/>
</dbReference>
<proteinExistence type="inferred from homology"/>
<feature type="chain" id="PRO_1000195756" description="Large ribosomal subunit protein uL11">
    <location>
        <begin position="1"/>
        <end position="159"/>
    </location>
</feature>
<accession>A9A9N0</accession>
<name>RL11_METM6</name>
<gene>
    <name evidence="1" type="primary">rpl11</name>
    <name type="ordered locus">MmarC6_1240</name>
</gene>